<name>KCY_SALG2</name>
<accession>B5R8J7</accession>
<keyword id="KW-0067">ATP-binding</keyword>
<keyword id="KW-0963">Cytoplasm</keyword>
<keyword id="KW-0418">Kinase</keyword>
<keyword id="KW-0547">Nucleotide-binding</keyword>
<keyword id="KW-0808">Transferase</keyword>
<evidence type="ECO:0000255" key="1">
    <source>
        <dbReference type="HAMAP-Rule" id="MF_00238"/>
    </source>
</evidence>
<reference key="1">
    <citation type="journal article" date="2008" name="Genome Res.">
        <title>Comparative genome analysis of Salmonella enteritidis PT4 and Salmonella gallinarum 287/91 provides insights into evolutionary and host adaptation pathways.</title>
        <authorList>
            <person name="Thomson N.R."/>
            <person name="Clayton D.J."/>
            <person name="Windhorst D."/>
            <person name="Vernikos G."/>
            <person name="Davidson S."/>
            <person name="Churcher C."/>
            <person name="Quail M.A."/>
            <person name="Stevens M."/>
            <person name="Jones M.A."/>
            <person name="Watson M."/>
            <person name="Barron A."/>
            <person name="Layton A."/>
            <person name="Pickard D."/>
            <person name="Kingsley R.A."/>
            <person name="Bignell A."/>
            <person name="Clark L."/>
            <person name="Harris B."/>
            <person name="Ormond D."/>
            <person name="Abdellah Z."/>
            <person name="Brooks K."/>
            <person name="Cherevach I."/>
            <person name="Chillingworth T."/>
            <person name="Woodward J."/>
            <person name="Norberczak H."/>
            <person name="Lord A."/>
            <person name="Arrowsmith C."/>
            <person name="Jagels K."/>
            <person name="Moule S."/>
            <person name="Mungall K."/>
            <person name="Saunders M."/>
            <person name="Whitehead S."/>
            <person name="Chabalgoity J.A."/>
            <person name="Maskell D."/>
            <person name="Humphreys T."/>
            <person name="Roberts M."/>
            <person name="Barrow P.A."/>
            <person name="Dougan G."/>
            <person name="Parkhill J."/>
        </authorList>
    </citation>
    <scope>NUCLEOTIDE SEQUENCE [LARGE SCALE GENOMIC DNA]</scope>
    <source>
        <strain>287/91 / NCTC 13346</strain>
    </source>
</reference>
<organism>
    <name type="scientific">Salmonella gallinarum (strain 287/91 / NCTC 13346)</name>
    <dbReference type="NCBI Taxonomy" id="550538"/>
    <lineage>
        <taxon>Bacteria</taxon>
        <taxon>Pseudomonadati</taxon>
        <taxon>Pseudomonadota</taxon>
        <taxon>Gammaproteobacteria</taxon>
        <taxon>Enterobacterales</taxon>
        <taxon>Enterobacteriaceae</taxon>
        <taxon>Salmonella</taxon>
    </lineage>
</organism>
<dbReference type="EC" id="2.7.4.25" evidence="1"/>
<dbReference type="EMBL" id="AM933173">
    <property type="protein sequence ID" value="CAR36812.1"/>
    <property type="molecule type" value="Genomic_DNA"/>
</dbReference>
<dbReference type="RefSeq" id="WP_000125007.1">
    <property type="nucleotide sequence ID" value="NC_011274.1"/>
</dbReference>
<dbReference type="SMR" id="B5R8J7"/>
<dbReference type="KEGG" id="seg:SG0922"/>
<dbReference type="HOGENOM" id="CLU_079959_0_2_6"/>
<dbReference type="Proteomes" id="UP000008321">
    <property type="component" value="Chromosome"/>
</dbReference>
<dbReference type="GO" id="GO:0005829">
    <property type="term" value="C:cytosol"/>
    <property type="evidence" value="ECO:0007669"/>
    <property type="project" value="TreeGrafter"/>
</dbReference>
<dbReference type="GO" id="GO:0005524">
    <property type="term" value="F:ATP binding"/>
    <property type="evidence" value="ECO:0007669"/>
    <property type="project" value="UniProtKB-UniRule"/>
</dbReference>
<dbReference type="GO" id="GO:0036430">
    <property type="term" value="F:CMP kinase activity"/>
    <property type="evidence" value="ECO:0007669"/>
    <property type="project" value="RHEA"/>
</dbReference>
<dbReference type="GO" id="GO:0036431">
    <property type="term" value="F:dCMP kinase activity"/>
    <property type="evidence" value="ECO:0007669"/>
    <property type="project" value="RHEA"/>
</dbReference>
<dbReference type="GO" id="GO:0015949">
    <property type="term" value="P:nucleobase-containing small molecule interconversion"/>
    <property type="evidence" value="ECO:0007669"/>
    <property type="project" value="TreeGrafter"/>
</dbReference>
<dbReference type="GO" id="GO:0006220">
    <property type="term" value="P:pyrimidine nucleotide metabolic process"/>
    <property type="evidence" value="ECO:0007669"/>
    <property type="project" value="UniProtKB-UniRule"/>
</dbReference>
<dbReference type="CDD" id="cd02020">
    <property type="entry name" value="CMPK"/>
    <property type="match status" value="1"/>
</dbReference>
<dbReference type="FunFam" id="3.40.50.300:FF:000262">
    <property type="entry name" value="Cytidylate kinase"/>
    <property type="match status" value="1"/>
</dbReference>
<dbReference type="Gene3D" id="3.40.50.300">
    <property type="entry name" value="P-loop containing nucleotide triphosphate hydrolases"/>
    <property type="match status" value="1"/>
</dbReference>
<dbReference type="HAMAP" id="MF_00238">
    <property type="entry name" value="Cytidyl_kinase_type1"/>
    <property type="match status" value="1"/>
</dbReference>
<dbReference type="InterPro" id="IPR003136">
    <property type="entry name" value="Cytidylate_kin"/>
</dbReference>
<dbReference type="InterPro" id="IPR011994">
    <property type="entry name" value="Cytidylate_kinase_dom"/>
</dbReference>
<dbReference type="InterPro" id="IPR027417">
    <property type="entry name" value="P-loop_NTPase"/>
</dbReference>
<dbReference type="NCBIfam" id="TIGR00017">
    <property type="entry name" value="cmk"/>
    <property type="match status" value="1"/>
</dbReference>
<dbReference type="PANTHER" id="PTHR21299:SF2">
    <property type="entry name" value="CYTIDYLATE KINASE"/>
    <property type="match status" value="1"/>
</dbReference>
<dbReference type="PANTHER" id="PTHR21299">
    <property type="entry name" value="CYTIDYLATE KINASE/PANTOATE-BETA-ALANINE LIGASE"/>
    <property type="match status" value="1"/>
</dbReference>
<dbReference type="Pfam" id="PF02224">
    <property type="entry name" value="Cytidylate_kin"/>
    <property type="match status" value="1"/>
</dbReference>
<dbReference type="SUPFAM" id="SSF52540">
    <property type="entry name" value="P-loop containing nucleoside triphosphate hydrolases"/>
    <property type="match status" value="1"/>
</dbReference>
<sequence>MTAIAPVITIDGPSGAGKGTLCKAMAEALQWHLLDSGAIYRVLALAALHHHVDLASEDALVPLASHLDVRFVSTDGNLEVILEGEDVSGEIRTQEVANAASQVAAFPRVREALLRRQRAFREAPGLIADGRDMGTVVFPDAPVKIFLDASSEERAHRRMLQLQENGFSVNFERLLAEIKERDDRDRNRAVAPLVPAADALVLDSTRLSIEQVIEKALQYARQKLALA</sequence>
<proteinExistence type="inferred from homology"/>
<feature type="chain" id="PRO_1000100682" description="Cytidylate kinase">
    <location>
        <begin position="1"/>
        <end position="227"/>
    </location>
</feature>
<feature type="binding site" evidence="1">
    <location>
        <begin position="12"/>
        <end position="20"/>
    </location>
    <ligand>
        <name>ATP</name>
        <dbReference type="ChEBI" id="CHEBI:30616"/>
    </ligand>
</feature>
<protein>
    <recommendedName>
        <fullName evidence="1">Cytidylate kinase</fullName>
        <shortName evidence="1">CK</shortName>
        <ecNumber evidence="1">2.7.4.25</ecNumber>
    </recommendedName>
    <alternativeName>
        <fullName evidence="1">Cytidine monophosphate kinase</fullName>
        <shortName evidence="1">CMP kinase</shortName>
    </alternativeName>
</protein>
<gene>
    <name evidence="1" type="primary">cmk</name>
    <name type="ordered locus">SG0922</name>
</gene>
<comment type="catalytic activity">
    <reaction evidence="1">
        <text>CMP + ATP = CDP + ADP</text>
        <dbReference type="Rhea" id="RHEA:11600"/>
        <dbReference type="ChEBI" id="CHEBI:30616"/>
        <dbReference type="ChEBI" id="CHEBI:58069"/>
        <dbReference type="ChEBI" id="CHEBI:60377"/>
        <dbReference type="ChEBI" id="CHEBI:456216"/>
        <dbReference type="EC" id="2.7.4.25"/>
    </reaction>
</comment>
<comment type="catalytic activity">
    <reaction evidence="1">
        <text>dCMP + ATP = dCDP + ADP</text>
        <dbReference type="Rhea" id="RHEA:25094"/>
        <dbReference type="ChEBI" id="CHEBI:30616"/>
        <dbReference type="ChEBI" id="CHEBI:57566"/>
        <dbReference type="ChEBI" id="CHEBI:58593"/>
        <dbReference type="ChEBI" id="CHEBI:456216"/>
        <dbReference type="EC" id="2.7.4.25"/>
    </reaction>
</comment>
<comment type="subcellular location">
    <subcellularLocation>
        <location evidence="1">Cytoplasm</location>
    </subcellularLocation>
</comment>
<comment type="similarity">
    <text evidence="1">Belongs to the cytidylate kinase family. Type 1 subfamily.</text>
</comment>